<sequence>MALDIERIKEELSQATVLELKQLIDALKEAWGVTAAAPVAVAAAPAAGAAAAPAEEKTEFDVILKEAGAKKLEVIKELRAITGLGLKEAKDLAEKGGPVKEGVSKQEAEEIKKKLEAVGAVVELK</sequence>
<name>RL7_THET2</name>
<comment type="function">
    <text evidence="1">Forms part of the ribosomal stalk which helps the ribosome interact with GTP-bound translation factors. Is thus essential for accurate translation.</text>
</comment>
<comment type="subunit">
    <text evidence="1">Homodimer. Part of the ribosomal stalk of the 50S ribosomal subunit. Forms a multimeric L10(L12)X complex, where L10 forms an elongated spine to which 2 to 4 L12 dimers bind in a sequential fashion. Binds GTP-bound translation factors.</text>
</comment>
<comment type="similarity">
    <text evidence="1">Belongs to the bacterial ribosomal protein bL12 family.</text>
</comment>
<feature type="chain" id="PRO_0000243518" description="Large ribosomal subunit protein bL12">
    <location>
        <begin position="1"/>
        <end position="125"/>
    </location>
</feature>
<feature type="strand" evidence="3">
    <location>
        <begin position="66"/>
        <end position="68"/>
    </location>
</feature>
<feature type="turn" evidence="3">
    <location>
        <begin position="69"/>
        <end position="77"/>
    </location>
</feature>
<feature type="turn" evidence="3">
    <location>
        <begin position="79"/>
        <end position="84"/>
    </location>
</feature>
<feature type="helix" evidence="3">
    <location>
        <begin position="85"/>
        <end position="91"/>
    </location>
</feature>
<feature type="helix" evidence="3">
    <location>
        <begin position="102"/>
        <end position="104"/>
    </location>
</feature>
<feature type="turn" evidence="3">
    <location>
        <begin position="106"/>
        <end position="108"/>
    </location>
</feature>
<feature type="turn" evidence="3">
    <location>
        <begin position="111"/>
        <end position="113"/>
    </location>
</feature>
<feature type="strand" evidence="3">
    <location>
        <begin position="114"/>
        <end position="117"/>
    </location>
</feature>
<proteinExistence type="evidence at protein level"/>
<reference key="1">
    <citation type="journal article" date="2004" name="Nat. Biotechnol.">
        <title>The genome sequence of the extreme thermophile Thermus thermophilus.</title>
        <authorList>
            <person name="Henne A."/>
            <person name="Brueggemann H."/>
            <person name="Raasch C."/>
            <person name="Wiezer A."/>
            <person name="Hartsch T."/>
            <person name="Liesegang H."/>
            <person name="Johann A."/>
            <person name="Lienard T."/>
            <person name="Gohl O."/>
            <person name="Martinez-Arias R."/>
            <person name="Jacobi C."/>
            <person name="Starkuviene V."/>
            <person name="Schlenczeck S."/>
            <person name="Dencker S."/>
            <person name="Huber R."/>
            <person name="Klenk H.-P."/>
            <person name="Kramer W."/>
            <person name="Merkl R."/>
            <person name="Gottschalk G."/>
            <person name="Fritz H.-J."/>
        </authorList>
    </citation>
    <scope>NUCLEOTIDE SEQUENCE [LARGE SCALE GENOMIC DNA]</scope>
    <source>
        <strain>ATCC BAA-163 / DSM 7039 / HB27</strain>
    </source>
</reference>
<protein>
    <recommendedName>
        <fullName evidence="1">Large ribosomal subunit protein bL12</fullName>
    </recommendedName>
    <alternativeName>
        <fullName evidence="2">50S ribosomal protein L7/L12</fullName>
    </alternativeName>
</protein>
<keyword id="KW-0002">3D-structure</keyword>
<keyword id="KW-0687">Ribonucleoprotein</keyword>
<keyword id="KW-0689">Ribosomal protein</keyword>
<dbReference type="EMBL" id="AE017221">
    <property type="protein sequence ID" value="AAS82118.1"/>
    <property type="molecule type" value="Genomic_DNA"/>
</dbReference>
<dbReference type="RefSeq" id="WP_008630582.1">
    <property type="nucleotide sequence ID" value="NC_005835.1"/>
</dbReference>
<dbReference type="PDB" id="4V9J">
    <property type="method" value="X-ray"/>
    <property type="resolution" value="3.86 A"/>
    <property type="chains" value="Be/De=51-122"/>
</dbReference>
<dbReference type="PDB" id="4V9K">
    <property type="method" value="X-ray"/>
    <property type="resolution" value="3.50 A"/>
    <property type="chains" value="Be/De=51-122"/>
</dbReference>
<dbReference type="PDB" id="4V9L">
    <property type="method" value="X-ray"/>
    <property type="resolution" value="3.50 A"/>
    <property type="chains" value="Be/De=51-122"/>
</dbReference>
<dbReference type="PDB" id="4V9M">
    <property type="method" value="X-ray"/>
    <property type="resolution" value="4.00 A"/>
    <property type="chains" value="Be/De=51-122"/>
</dbReference>
<dbReference type="PDB" id="4W29">
    <property type="method" value="X-ray"/>
    <property type="resolution" value="3.80 A"/>
    <property type="chains" value="Be/De=51-122"/>
</dbReference>
<dbReference type="PDBsum" id="4V9J"/>
<dbReference type="PDBsum" id="4V9K"/>
<dbReference type="PDBsum" id="4V9L"/>
<dbReference type="PDBsum" id="4V9M"/>
<dbReference type="PDBsum" id="4W29"/>
<dbReference type="SMR" id="Q72GS2"/>
<dbReference type="IntAct" id="Q72GS2">
    <property type="interactions" value="1"/>
</dbReference>
<dbReference type="GeneID" id="3168576"/>
<dbReference type="KEGG" id="tth:TT_C1776"/>
<dbReference type="eggNOG" id="COG0222">
    <property type="taxonomic scope" value="Bacteria"/>
</dbReference>
<dbReference type="HOGENOM" id="CLU_086499_3_2_0"/>
<dbReference type="OrthoDB" id="9811748at2"/>
<dbReference type="Proteomes" id="UP000000592">
    <property type="component" value="Chromosome"/>
</dbReference>
<dbReference type="GO" id="GO:0022625">
    <property type="term" value="C:cytosolic large ribosomal subunit"/>
    <property type="evidence" value="ECO:0007669"/>
    <property type="project" value="TreeGrafter"/>
</dbReference>
<dbReference type="GO" id="GO:0003729">
    <property type="term" value="F:mRNA binding"/>
    <property type="evidence" value="ECO:0007669"/>
    <property type="project" value="TreeGrafter"/>
</dbReference>
<dbReference type="GO" id="GO:0003735">
    <property type="term" value="F:structural constituent of ribosome"/>
    <property type="evidence" value="ECO:0007669"/>
    <property type="project" value="InterPro"/>
</dbReference>
<dbReference type="GO" id="GO:0006412">
    <property type="term" value="P:translation"/>
    <property type="evidence" value="ECO:0007669"/>
    <property type="project" value="UniProtKB-UniRule"/>
</dbReference>
<dbReference type="CDD" id="cd00387">
    <property type="entry name" value="Ribosomal_L7_L12"/>
    <property type="match status" value="1"/>
</dbReference>
<dbReference type="FunFam" id="3.30.1390.10:FF:000001">
    <property type="entry name" value="50S ribosomal protein L7/L12"/>
    <property type="match status" value="1"/>
</dbReference>
<dbReference type="Gene3D" id="3.30.1390.10">
    <property type="match status" value="1"/>
</dbReference>
<dbReference type="Gene3D" id="1.20.5.710">
    <property type="entry name" value="Single helix bin"/>
    <property type="match status" value="1"/>
</dbReference>
<dbReference type="HAMAP" id="MF_00368">
    <property type="entry name" value="Ribosomal_bL12"/>
    <property type="match status" value="1"/>
</dbReference>
<dbReference type="InterPro" id="IPR000206">
    <property type="entry name" value="Ribosomal_bL12"/>
</dbReference>
<dbReference type="InterPro" id="IPR013823">
    <property type="entry name" value="Ribosomal_bL12_C"/>
</dbReference>
<dbReference type="InterPro" id="IPR014719">
    <property type="entry name" value="Ribosomal_bL12_C/ClpS-like"/>
</dbReference>
<dbReference type="InterPro" id="IPR008932">
    <property type="entry name" value="Ribosomal_bL12_oligo"/>
</dbReference>
<dbReference type="InterPro" id="IPR036235">
    <property type="entry name" value="Ribosomal_bL12_oligo_N_sf"/>
</dbReference>
<dbReference type="NCBIfam" id="TIGR00855">
    <property type="entry name" value="L12"/>
    <property type="match status" value="1"/>
</dbReference>
<dbReference type="PANTHER" id="PTHR45987">
    <property type="entry name" value="39S RIBOSOMAL PROTEIN L12"/>
    <property type="match status" value="1"/>
</dbReference>
<dbReference type="PANTHER" id="PTHR45987:SF4">
    <property type="entry name" value="LARGE RIBOSOMAL SUBUNIT PROTEIN BL12M"/>
    <property type="match status" value="1"/>
</dbReference>
<dbReference type="Pfam" id="PF00542">
    <property type="entry name" value="Ribosomal_L12"/>
    <property type="match status" value="1"/>
</dbReference>
<dbReference type="Pfam" id="PF16320">
    <property type="entry name" value="Ribosomal_L12_N"/>
    <property type="match status" value="1"/>
</dbReference>
<dbReference type="SUPFAM" id="SSF54736">
    <property type="entry name" value="ClpS-like"/>
    <property type="match status" value="1"/>
</dbReference>
<dbReference type="SUPFAM" id="SSF48300">
    <property type="entry name" value="Ribosomal protein L7/12, oligomerisation (N-terminal) domain"/>
    <property type="match status" value="1"/>
</dbReference>
<organism>
    <name type="scientific">Thermus thermophilus (strain ATCC BAA-163 / DSM 7039 / HB27)</name>
    <dbReference type="NCBI Taxonomy" id="262724"/>
    <lineage>
        <taxon>Bacteria</taxon>
        <taxon>Thermotogati</taxon>
        <taxon>Deinococcota</taxon>
        <taxon>Deinococci</taxon>
        <taxon>Thermales</taxon>
        <taxon>Thermaceae</taxon>
        <taxon>Thermus</taxon>
    </lineage>
</organism>
<gene>
    <name evidence="1" type="primary">rplL</name>
    <name type="ordered locus">TT_C1776</name>
</gene>
<accession>Q72GS2</accession>
<evidence type="ECO:0000255" key="1">
    <source>
        <dbReference type="HAMAP-Rule" id="MF_00368"/>
    </source>
</evidence>
<evidence type="ECO:0000305" key="2"/>
<evidence type="ECO:0007829" key="3">
    <source>
        <dbReference type="PDB" id="4V9K"/>
    </source>
</evidence>